<organism>
    <name type="scientific">Chlamydia abortus (strain DSM 27085 / S26/3)</name>
    <name type="common">Chlamydophila abortus</name>
    <dbReference type="NCBI Taxonomy" id="218497"/>
    <lineage>
        <taxon>Bacteria</taxon>
        <taxon>Pseudomonadati</taxon>
        <taxon>Chlamydiota</taxon>
        <taxon>Chlamydiia</taxon>
        <taxon>Chlamydiales</taxon>
        <taxon>Chlamydiaceae</taxon>
        <taxon>Chlamydia/Chlamydophila group</taxon>
        <taxon>Chlamydia</taxon>
    </lineage>
</organism>
<gene>
    <name evidence="1" type="primary">hemH</name>
    <name type="ordered locus">CAB136</name>
</gene>
<keyword id="KW-0963">Cytoplasm</keyword>
<keyword id="KW-0350">Heme biosynthesis</keyword>
<keyword id="KW-0408">Iron</keyword>
<keyword id="KW-0456">Lyase</keyword>
<keyword id="KW-0479">Metal-binding</keyword>
<keyword id="KW-0627">Porphyrin biosynthesis</keyword>
<accession>Q5L6X6</accession>
<proteinExistence type="inferred from homology"/>
<comment type="function">
    <text evidence="1">Catalyzes the ferrous insertion into protoporphyrin IX.</text>
</comment>
<comment type="catalytic activity">
    <reaction evidence="1">
        <text>heme b + 2 H(+) = protoporphyrin IX + Fe(2+)</text>
        <dbReference type="Rhea" id="RHEA:22584"/>
        <dbReference type="ChEBI" id="CHEBI:15378"/>
        <dbReference type="ChEBI" id="CHEBI:29033"/>
        <dbReference type="ChEBI" id="CHEBI:57306"/>
        <dbReference type="ChEBI" id="CHEBI:60344"/>
        <dbReference type="EC" id="4.98.1.1"/>
    </reaction>
</comment>
<comment type="pathway">
    <text evidence="1">Porphyrin-containing compound metabolism; protoheme biosynthesis; protoheme from protoporphyrin-IX: step 1/1.</text>
</comment>
<comment type="subcellular location">
    <subcellularLocation>
        <location evidence="1">Cytoplasm</location>
    </subcellularLocation>
</comment>
<comment type="similarity">
    <text evidence="1">Belongs to the ferrochelatase family.</text>
</comment>
<evidence type="ECO:0000255" key="1">
    <source>
        <dbReference type="HAMAP-Rule" id="MF_00323"/>
    </source>
</evidence>
<dbReference type="EC" id="4.98.1.1" evidence="1"/>
<dbReference type="EMBL" id="CR848038">
    <property type="protein sequence ID" value="CAH63594.1"/>
    <property type="molecule type" value="Genomic_DNA"/>
</dbReference>
<dbReference type="RefSeq" id="WP_011096853.1">
    <property type="nucleotide sequence ID" value="NC_004552.2"/>
</dbReference>
<dbReference type="SMR" id="Q5L6X6"/>
<dbReference type="KEGG" id="cab:CAB136"/>
<dbReference type="eggNOG" id="COG0276">
    <property type="taxonomic scope" value="Bacteria"/>
</dbReference>
<dbReference type="HOGENOM" id="CLU_018884_4_1_0"/>
<dbReference type="OrthoDB" id="9809741at2"/>
<dbReference type="UniPathway" id="UPA00252">
    <property type="reaction ID" value="UER00325"/>
</dbReference>
<dbReference type="Proteomes" id="UP000001012">
    <property type="component" value="Chromosome"/>
</dbReference>
<dbReference type="GO" id="GO:0005737">
    <property type="term" value="C:cytoplasm"/>
    <property type="evidence" value="ECO:0007669"/>
    <property type="project" value="UniProtKB-SubCell"/>
</dbReference>
<dbReference type="GO" id="GO:0004325">
    <property type="term" value="F:ferrochelatase activity"/>
    <property type="evidence" value="ECO:0007669"/>
    <property type="project" value="UniProtKB-UniRule"/>
</dbReference>
<dbReference type="GO" id="GO:0046872">
    <property type="term" value="F:metal ion binding"/>
    <property type="evidence" value="ECO:0007669"/>
    <property type="project" value="UniProtKB-KW"/>
</dbReference>
<dbReference type="GO" id="GO:0006783">
    <property type="term" value="P:heme biosynthetic process"/>
    <property type="evidence" value="ECO:0007669"/>
    <property type="project" value="UniProtKB-UniRule"/>
</dbReference>
<dbReference type="CDD" id="cd00419">
    <property type="entry name" value="Ferrochelatase_C"/>
    <property type="match status" value="1"/>
</dbReference>
<dbReference type="CDD" id="cd03411">
    <property type="entry name" value="Ferrochelatase_N"/>
    <property type="match status" value="1"/>
</dbReference>
<dbReference type="Gene3D" id="3.40.50.1400">
    <property type="match status" value="2"/>
</dbReference>
<dbReference type="HAMAP" id="MF_00323">
    <property type="entry name" value="Ferrochelatase"/>
    <property type="match status" value="1"/>
</dbReference>
<dbReference type="InterPro" id="IPR001015">
    <property type="entry name" value="Ferrochelatase"/>
</dbReference>
<dbReference type="InterPro" id="IPR019772">
    <property type="entry name" value="Ferrochelatase_AS"/>
</dbReference>
<dbReference type="InterPro" id="IPR033644">
    <property type="entry name" value="Ferrochelatase_C"/>
</dbReference>
<dbReference type="InterPro" id="IPR033659">
    <property type="entry name" value="Ferrochelatase_N"/>
</dbReference>
<dbReference type="NCBIfam" id="TIGR00109">
    <property type="entry name" value="hemH"/>
    <property type="match status" value="1"/>
</dbReference>
<dbReference type="PANTHER" id="PTHR11108">
    <property type="entry name" value="FERROCHELATASE"/>
    <property type="match status" value="1"/>
</dbReference>
<dbReference type="PANTHER" id="PTHR11108:SF1">
    <property type="entry name" value="FERROCHELATASE, MITOCHONDRIAL"/>
    <property type="match status" value="1"/>
</dbReference>
<dbReference type="Pfam" id="PF00762">
    <property type="entry name" value="Ferrochelatase"/>
    <property type="match status" value="1"/>
</dbReference>
<dbReference type="SUPFAM" id="SSF53800">
    <property type="entry name" value="Chelatase"/>
    <property type="match status" value="1"/>
</dbReference>
<dbReference type="PROSITE" id="PS00534">
    <property type="entry name" value="FERROCHELATASE"/>
    <property type="match status" value="1"/>
</dbReference>
<feature type="chain" id="PRO_1000019290" description="Ferrochelatase">
    <location>
        <begin position="1"/>
        <end position="318"/>
    </location>
</feature>
<feature type="binding site" evidence="1">
    <location>
        <position position="186"/>
    </location>
    <ligand>
        <name>Fe cation</name>
        <dbReference type="ChEBI" id="CHEBI:24875"/>
    </ligand>
</feature>
<feature type="binding site" evidence="1">
    <location>
        <position position="264"/>
    </location>
    <ligand>
        <name>Fe cation</name>
        <dbReference type="ChEBI" id="CHEBI:24875"/>
    </ligand>
</feature>
<protein>
    <recommendedName>
        <fullName evidence="1">Ferrochelatase</fullName>
        <ecNumber evidence="1">4.98.1.1</ecNumber>
    </recommendedName>
    <alternativeName>
        <fullName evidence="1">Heme synthase</fullName>
    </alternativeName>
    <alternativeName>
        <fullName evidence="1">Protoheme ferro-lyase</fullName>
    </alternativeName>
</protein>
<reference key="1">
    <citation type="journal article" date="2005" name="Genome Res.">
        <title>The Chlamydophila abortus genome sequence reveals an array of variable proteins that contribute to interspecies variation.</title>
        <authorList>
            <person name="Thomson N.R."/>
            <person name="Yeats C."/>
            <person name="Bell K."/>
            <person name="Holden M.T.G."/>
            <person name="Bentley S.D."/>
            <person name="Livingstone M."/>
            <person name="Cerdeno-Tarraga A.-M."/>
            <person name="Harris B."/>
            <person name="Doggett J."/>
            <person name="Ormond D."/>
            <person name="Mungall K."/>
            <person name="Clarke K."/>
            <person name="Feltwell T."/>
            <person name="Hance Z."/>
            <person name="Sanders M."/>
            <person name="Quail M.A."/>
            <person name="Price C."/>
            <person name="Barrell B.G."/>
            <person name="Parkhill J."/>
            <person name="Longbottom D."/>
        </authorList>
    </citation>
    <scope>NUCLEOTIDE SEQUENCE [LARGE SCALE GENOMIC DNA]</scope>
    <source>
        <strain>DSM 27085 / S26/3</strain>
    </source>
</reference>
<name>HEMH_CHLAB</name>
<sequence>MVSTYLLANFGGPRHSHDVEVFLTSLLTDRDVTGGCLPSFLHKRLFSFIAKKRAPKVVPQYNCIGGYSPIYQDTEALAKTLSSHLDAPVITFHRYLPDTHSQTIQQLKTLGDLPVVGVPLFPHFTYAVTGSIVRFIHNHLPSLNISWVAHFGNHPQFISCMIDHILEFLQSHDIPTHDCCLLFSAHGLPMRYVNKGDPYNVQCEKSFAAISERLPNIETFLCYQSKFGLGKWLTPSTKEVCKTLKTNKKYVLIVPFGFTSDHIETLYEIEKEYIAILIDRKYQALRVPAIYQSPQWVQSLATIIQSTRYVEKHSLIKS</sequence>